<sequence length="88" mass="10043">MLHHIPLFLSSTASPFFIRLIRFLTYSVIFTRSSSSICIVVLMPLLMYIRCPLSAPASAIYTFNCHLLSACQSRLKFVLISTMRPHHI</sequence>
<protein>
    <recommendedName>
        <fullName>Uncharacterized 10.0 kDa protein</fullName>
    </recommendedName>
</protein>
<proteinExistence type="predicted"/>
<organism>
    <name type="scientific">Thermoproteus tenax virus 1 (strain KRA1)</name>
    <name type="common">TTV1</name>
    <dbReference type="NCBI Taxonomy" id="10480"/>
    <lineage>
        <taxon>Viruses</taxon>
        <taxon>Adnaviria</taxon>
        <taxon>Zilligvirae</taxon>
        <taxon>Taleaviricota</taxon>
        <taxon>Tokiviricetes</taxon>
        <taxon>Primavirales</taxon>
        <taxon>Tristromaviridae</taxon>
        <taxon>Betatristromavirus</taxon>
        <taxon>Betatristromavirus TTV1</taxon>
    </lineage>
</organism>
<reference key="1">
    <citation type="submission" date="1989-03" db="EMBL/GenBank/DDBJ databases">
        <authorList>
            <person name="Neumann H."/>
        </authorList>
    </citation>
    <scope>NUCLEOTIDE SEQUENCE [GENOMIC DNA]</scope>
</reference>
<feature type="chain" id="PRO_0000222965" description="Uncharacterized 10.0 kDa protein">
    <location>
        <begin position="1"/>
        <end position="88"/>
    </location>
</feature>
<organismHost>
    <name type="scientific">Thermoproteus tenax</name>
    <dbReference type="NCBI Taxonomy" id="2271"/>
</organismHost>
<keyword id="KW-1185">Reference proteome</keyword>
<dbReference type="EMBL" id="X14855">
    <property type="protein sequence ID" value="CAA32977.1"/>
    <property type="molecule type" value="Genomic_DNA"/>
</dbReference>
<dbReference type="Proteomes" id="UP000009250">
    <property type="component" value="Genome"/>
</dbReference>
<accession>P19283</accession>
<name>YOR8_TTV1K</name>